<proteinExistence type="inferred from homology"/>
<reference key="1">
    <citation type="submission" date="2007-05" db="EMBL/GenBank/DDBJ databases">
        <title>Complete sequence of chromosome of Staphylococcus aureus subsp. aureus JH9.</title>
        <authorList>
            <consortium name="US DOE Joint Genome Institute"/>
            <person name="Copeland A."/>
            <person name="Lucas S."/>
            <person name="Lapidus A."/>
            <person name="Barry K."/>
            <person name="Detter J.C."/>
            <person name="Glavina del Rio T."/>
            <person name="Hammon N."/>
            <person name="Israni S."/>
            <person name="Pitluck S."/>
            <person name="Chain P."/>
            <person name="Malfatti S."/>
            <person name="Shin M."/>
            <person name="Vergez L."/>
            <person name="Schmutz J."/>
            <person name="Larimer F."/>
            <person name="Land M."/>
            <person name="Hauser L."/>
            <person name="Kyrpides N."/>
            <person name="Kim E."/>
            <person name="Tomasz A."/>
            <person name="Richardson P."/>
        </authorList>
    </citation>
    <scope>NUCLEOTIDE SEQUENCE [LARGE SCALE GENOMIC DNA]</scope>
    <source>
        <strain>JH9</strain>
    </source>
</reference>
<protein>
    <recommendedName>
        <fullName evidence="1">UPF0397 protein SaurJH9_2709</fullName>
    </recommendedName>
</protein>
<organism>
    <name type="scientific">Staphylococcus aureus (strain JH9)</name>
    <dbReference type="NCBI Taxonomy" id="359786"/>
    <lineage>
        <taxon>Bacteria</taxon>
        <taxon>Bacillati</taxon>
        <taxon>Bacillota</taxon>
        <taxon>Bacilli</taxon>
        <taxon>Bacillales</taxon>
        <taxon>Staphylococcaceae</taxon>
        <taxon>Staphylococcus</taxon>
    </lineage>
</organism>
<dbReference type="EMBL" id="CP000703">
    <property type="protein sequence ID" value="ABQ50485.1"/>
    <property type="molecule type" value="Genomic_DNA"/>
</dbReference>
<dbReference type="RefSeq" id="WP_000743711.1">
    <property type="nucleotide sequence ID" value="NC_009487.1"/>
</dbReference>
<dbReference type="KEGG" id="saj:SaurJH9_2709"/>
<dbReference type="HOGENOM" id="CLU_120023_0_0_9"/>
<dbReference type="GO" id="GO:0005886">
    <property type="term" value="C:plasma membrane"/>
    <property type="evidence" value="ECO:0007669"/>
    <property type="project" value="UniProtKB-SubCell"/>
</dbReference>
<dbReference type="Gene3D" id="1.10.1760.20">
    <property type="match status" value="1"/>
</dbReference>
<dbReference type="HAMAP" id="MF_01572">
    <property type="entry name" value="UPF0397"/>
    <property type="match status" value="1"/>
</dbReference>
<dbReference type="InterPro" id="IPR009825">
    <property type="entry name" value="ECF_substrate-spec-like"/>
</dbReference>
<dbReference type="InterPro" id="IPR022914">
    <property type="entry name" value="UPF0397"/>
</dbReference>
<dbReference type="NCBIfam" id="NF010182">
    <property type="entry name" value="PRK13661.1"/>
    <property type="match status" value="1"/>
</dbReference>
<dbReference type="PANTHER" id="PTHR37815">
    <property type="entry name" value="UPF0397 PROTEIN BC_2624-RELATED"/>
    <property type="match status" value="1"/>
</dbReference>
<dbReference type="PANTHER" id="PTHR37815:SF3">
    <property type="entry name" value="UPF0397 PROTEIN SPR0429"/>
    <property type="match status" value="1"/>
</dbReference>
<dbReference type="Pfam" id="PF07155">
    <property type="entry name" value="ECF-ribofla_trS"/>
    <property type="match status" value="1"/>
</dbReference>
<name>Y2709_STAA9</name>
<sequence>MKKQDISVKTVVAIGIGAAVFVILGRFVVIPTGFPNTNIETSYAFLALISAIFGPFAGLMTGLVGHAIKDFTTYGSAWWSWVICSGIIGCLYGWIGLKLNLSSGLFSRKSMIYFNIGQIIANIICWALIAPTLDILIYNEPANKVYTQGVISAVLNIISVGIIGTILLKAYASSQIKKGSLRKE</sequence>
<keyword id="KW-1003">Cell membrane</keyword>
<keyword id="KW-0472">Membrane</keyword>
<keyword id="KW-0812">Transmembrane</keyword>
<keyword id="KW-1133">Transmembrane helix</keyword>
<accession>A5IWB2</accession>
<gene>
    <name type="ordered locus">SaurJH9_2709</name>
</gene>
<evidence type="ECO:0000255" key="1">
    <source>
        <dbReference type="HAMAP-Rule" id="MF_01572"/>
    </source>
</evidence>
<comment type="subcellular location">
    <subcellularLocation>
        <location evidence="1">Cell membrane</location>
        <topology evidence="1">Multi-pass membrane protein</topology>
    </subcellularLocation>
</comment>
<comment type="similarity">
    <text evidence="1">Belongs to the UPF0397 family.</text>
</comment>
<feature type="chain" id="PRO_1000087876" description="UPF0397 protein SaurJH9_2709">
    <location>
        <begin position="1"/>
        <end position="184"/>
    </location>
</feature>
<feature type="transmembrane region" description="Helical" evidence="1">
    <location>
        <begin position="11"/>
        <end position="31"/>
    </location>
</feature>
<feature type="transmembrane region" description="Helical" evidence="1">
    <location>
        <begin position="44"/>
        <end position="64"/>
    </location>
</feature>
<feature type="transmembrane region" description="Helical" evidence="1">
    <location>
        <begin position="77"/>
        <end position="97"/>
    </location>
</feature>
<feature type="transmembrane region" description="Helical" evidence="1">
    <location>
        <begin position="111"/>
        <end position="131"/>
    </location>
</feature>
<feature type="transmembrane region" description="Helical" evidence="1">
    <location>
        <begin position="148"/>
        <end position="168"/>
    </location>
</feature>